<evidence type="ECO:0000255" key="1">
    <source>
        <dbReference type="HAMAP-Rule" id="MF_00210"/>
    </source>
</evidence>
<organism>
    <name type="scientific">Chlamydia trachomatis serovar L2 (strain ATCC VR-902B / DSM 19102 / 434/Bu)</name>
    <dbReference type="NCBI Taxonomy" id="471472"/>
    <lineage>
        <taxon>Bacteria</taxon>
        <taxon>Pseudomonadati</taxon>
        <taxon>Chlamydiota</taxon>
        <taxon>Chlamydiia</taxon>
        <taxon>Chlamydiales</taxon>
        <taxon>Chlamydiaceae</taxon>
        <taxon>Chlamydia/Chlamydophila group</taxon>
        <taxon>Chlamydia</taxon>
    </lineage>
</organism>
<comment type="function">
    <text evidence="1">Catalyzes the transfer of the enolpyruvyl moiety of phosphoenolpyruvate (PEP) to the 5-hydroxyl of shikimate-3-phosphate (S3P) to produce enolpyruvyl shikimate-3-phosphate and inorganic phosphate.</text>
</comment>
<comment type="catalytic activity">
    <reaction evidence="1">
        <text>3-phosphoshikimate + phosphoenolpyruvate = 5-O-(1-carboxyvinyl)-3-phosphoshikimate + phosphate</text>
        <dbReference type="Rhea" id="RHEA:21256"/>
        <dbReference type="ChEBI" id="CHEBI:43474"/>
        <dbReference type="ChEBI" id="CHEBI:57701"/>
        <dbReference type="ChEBI" id="CHEBI:58702"/>
        <dbReference type="ChEBI" id="CHEBI:145989"/>
        <dbReference type="EC" id="2.5.1.19"/>
    </reaction>
    <physiologicalReaction direction="left-to-right" evidence="1">
        <dbReference type="Rhea" id="RHEA:21257"/>
    </physiologicalReaction>
</comment>
<comment type="pathway">
    <text evidence="1">Metabolic intermediate biosynthesis; chorismate biosynthesis; chorismate from D-erythrose 4-phosphate and phosphoenolpyruvate: step 6/7.</text>
</comment>
<comment type="subunit">
    <text evidence="1">Monomer.</text>
</comment>
<comment type="subcellular location">
    <subcellularLocation>
        <location evidence="1">Cytoplasm</location>
    </subcellularLocation>
</comment>
<comment type="similarity">
    <text evidence="1">Belongs to the EPSP synthase family.</text>
</comment>
<reference key="1">
    <citation type="journal article" date="2008" name="Genome Res.">
        <title>Chlamydia trachomatis: genome sequence analysis of lymphogranuloma venereum isolates.</title>
        <authorList>
            <person name="Thomson N.R."/>
            <person name="Holden M.T.G."/>
            <person name="Carder C."/>
            <person name="Lennard N."/>
            <person name="Lockey S.J."/>
            <person name="Marsh P."/>
            <person name="Skipp P."/>
            <person name="O'Connor C.D."/>
            <person name="Goodhead I."/>
            <person name="Norbertzcak H."/>
            <person name="Harris B."/>
            <person name="Ormond D."/>
            <person name="Rance R."/>
            <person name="Quail M.A."/>
            <person name="Parkhill J."/>
            <person name="Stephens R.S."/>
            <person name="Clarke I.N."/>
        </authorList>
    </citation>
    <scope>NUCLEOTIDE SEQUENCE [LARGE SCALE GENOMIC DNA]</scope>
    <source>
        <strain>ATCC VR-902B / DSM 19102 / 434/Bu</strain>
    </source>
</reference>
<sequence length="440" mass="47770">MVSSNQALLISPSIPYGEIAVPPSKSHSLRAILFASLSKGTSIIENCLFSPDSQTMLTACEKMGAHVRRIGDSLHIQGNPDPHHCHPPYFHMGNSGIALRFLTALSTLSPTPTLITGSHTLKRRPIAPLLSSLKQLGAHIRQKTSSSIPFTIHGPLSPGHVTISGQDSQYASALAITAALAPYPLSFSIENLKERPWFDLTLDWLHSLNISFLRDQDSLTFPGGQSLESFSYSVPGDYSSAAFLASFGLLSSSSKPTILRNLPSQDSQGDKLLFSLLKQLGAHILIEKHHIEMHPSSFSGGEIDMDPFIDALPILAVLCCFAKNPSRLYNALGAKDKESNRIEAIAHELQKMGGSVHPTRDGLYIEPSRLHGAVVDSHNDHRIAMALAVAGVHASSGQTLLCNTQCINKSFPHFVIAAQTLHANVRHYQADFPLRSSFCR</sequence>
<protein>
    <recommendedName>
        <fullName evidence="1">3-phosphoshikimate 1-carboxyvinyltransferase</fullName>
        <ecNumber evidence="1">2.5.1.19</ecNumber>
    </recommendedName>
    <alternativeName>
        <fullName evidence="1">5-enolpyruvylshikimate-3-phosphate synthase</fullName>
        <shortName evidence="1">EPSP synthase</shortName>
        <shortName evidence="1">EPSPS</shortName>
    </alternativeName>
</protein>
<keyword id="KW-0028">Amino-acid biosynthesis</keyword>
<keyword id="KW-0057">Aromatic amino acid biosynthesis</keyword>
<keyword id="KW-0963">Cytoplasm</keyword>
<keyword id="KW-0808">Transferase</keyword>
<dbReference type="EC" id="2.5.1.19" evidence="1"/>
<dbReference type="EMBL" id="AM884176">
    <property type="protein sequence ID" value="CAP04061.1"/>
    <property type="molecule type" value="Genomic_DNA"/>
</dbReference>
<dbReference type="RefSeq" id="WP_009873759.1">
    <property type="nucleotide sequence ID" value="NC_010287.1"/>
</dbReference>
<dbReference type="RefSeq" id="YP_001654695.1">
    <property type="nucleotide sequence ID" value="NC_010287.1"/>
</dbReference>
<dbReference type="SMR" id="B0B7T5"/>
<dbReference type="KEGG" id="ctb:CTL0620"/>
<dbReference type="PATRIC" id="fig|471472.4.peg.669"/>
<dbReference type="HOGENOM" id="CLU_024321_0_0_0"/>
<dbReference type="UniPathway" id="UPA00053">
    <property type="reaction ID" value="UER00089"/>
</dbReference>
<dbReference type="Proteomes" id="UP001154402">
    <property type="component" value="Chromosome"/>
</dbReference>
<dbReference type="GO" id="GO:0005737">
    <property type="term" value="C:cytoplasm"/>
    <property type="evidence" value="ECO:0007669"/>
    <property type="project" value="UniProtKB-SubCell"/>
</dbReference>
<dbReference type="GO" id="GO:0003866">
    <property type="term" value="F:3-phosphoshikimate 1-carboxyvinyltransferase activity"/>
    <property type="evidence" value="ECO:0007669"/>
    <property type="project" value="UniProtKB-UniRule"/>
</dbReference>
<dbReference type="GO" id="GO:0008652">
    <property type="term" value="P:amino acid biosynthetic process"/>
    <property type="evidence" value="ECO:0007669"/>
    <property type="project" value="UniProtKB-KW"/>
</dbReference>
<dbReference type="GO" id="GO:0009073">
    <property type="term" value="P:aromatic amino acid family biosynthetic process"/>
    <property type="evidence" value="ECO:0007669"/>
    <property type="project" value="UniProtKB-KW"/>
</dbReference>
<dbReference type="GO" id="GO:0009423">
    <property type="term" value="P:chorismate biosynthetic process"/>
    <property type="evidence" value="ECO:0007669"/>
    <property type="project" value="UniProtKB-UniRule"/>
</dbReference>
<dbReference type="CDD" id="cd01556">
    <property type="entry name" value="EPSP_synthase"/>
    <property type="match status" value="1"/>
</dbReference>
<dbReference type="FunFam" id="3.65.10.10:FF:000020">
    <property type="entry name" value="3-phosphoshikimate 1-carboxyvinyltransferase"/>
    <property type="match status" value="1"/>
</dbReference>
<dbReference type="Gene3D" id="3.65.10.10">
    <property type="entry name" value="Enolpyruvate transferase domain"/>
    <property type="match status" value="2"/>
</dbReference>
<dbReference type="HAMAP" id="MF_00210">
    <property type="entry name" value="EPSP_synth"/>
    <property type="match status" value="1"/>
</dbReference>
<dbReference type="InterPro" id="IPR001986">
    <property type="entry name" value="Enolpyruvate_Tfrase_dom"/>
</dbReference>
<dbReference type="InterPro" id="IPR036968">
    <property type="entry name" value="Enolpyruvate_Tfrase_sf"/>
</dbReference>
<dbReference type="InterPro" id="IPR006264">
    <property type="entry name" value="EPSP_synthase"/>
</dbReference>
<dbReference type="InterPro" id="IPR023193">
    <property type="entry name" value="EPSP_synthase_CS"/>
</dbReference>
<dbReference type="InterPro" id="IPR013792">
    <property type="entry name" value="RNA3'P_cycl/enolpyr_Trfase_a/b"/>
</dbReference>
<dbReference type="NCBIfam" id="TIGR01356">
    <property type="entry name" value="aroA"/>
    <property type="match status" value="1"/>
</dbReference>
<dbReference type="PANTHER" id="PTHR21090">
    <property type="entry name" value="AROM/DEHYDROQUINATE SYNTHASE"/>
    <property type="match status" value="1"/>
</dbReference>
<dbReference type="PANTHER" id="PTHR21090:SF5">
    <property type="entry name" value="PENTAFUNCTIONAL AROM POLYPEPTIDE"/>
    <property type="match status" value="1"/>
</dbReference>
<dbReference type="Pfam" id="PF00275">
    <property type="entry name" value="EPSP_synthase"/>
    <property type="match status" value="1"/>
</dbReference>
<dbReference type="PIRSF" id="PIRSF000505">
    <property type="entry name" value="EPSPS"/>
    <property type="match status" value="1"/>
</dbReference>
<dbReference type="SUPFAM" id="SSF55205">
    <property type="entry name" value="EPT/RTPC-like"/>
    <property type="match status" value="1"/>
</dbReference>
<dbReference type="PROSITE" id="PS00104">
    <property type="entry name" value="EPSP_SYNTHASE_1"/>
    <property type="match status" value="1"/>
</dbReference>
<dbReference type="PROSITE" id="PS00885">
    <property type="entry name" value="EPSP_SYNTHASE_2"/>
    <property type="match status" value="1"/>
</dbReference>
<name>AROA_CHLT2</name>
<gene>
    <name evidence="1" type="primary">aroA</name>
    <name type="ordered locus">CTL0620</name>
</gene>
<accession>B0B7T5</accession>
<feature type="chain" id="PRO_1000099682" description="3-phosphoshikimate 1-carboxyvinyltransferase">
    <location>
        <begin position="1"/>
        <end position="440"/>
    </location>
</feature>
<feature type="active site" description="Proton acceptor" evidence="1">
    <location>
        <position position="310"/>
    </location>
</feature>
<feature type="binding site" evidence="1">
    <location>
        <position position="25"/>
    </location>
    <ligand>
        <name>3-phosphoshikimate</name>
        <dbReference type="ChEBI" id="CHEBI:145989"/>
    </ligand>
</feature>
<feature type="binding site" evidence="1">
    <location>
        <position position="25"/>
    </location>
    <ligand>
        <name>phosphoenolpyruvate</name>
        <dbReference type="ChEBI" id="CHEBI:58702"/>
    </ligand>
</feature>
<feature type="binding site" evidence="1">
    <location>
        <position position="26"/>
    </location>
    <ligand>
        <name>3-phosphoshikimate</name>
        <dbReference type="ChEBI" id="CHEBI:145989"/>
    </ligand>
</feature>
<feature type="binding site" evidence="1">
    <location>
        <position position="30"/>
    </location>
    <ligand>
        <name>3-phosphoshikimate</name>
        <dbReference type="ChEBI" id="CHEBI:145989"/>
    </ligand>
</feature>
<feature type="binding site" evidence="1">
    <location>
        <position position="96"/>
    </location>
    <ligand>
        <name>phosphoenolpyruvate</name>
        <dbReference type="ChEBI" id="CHEBI:58702"/>
    </ligand>
</feature>
<feature type="binding site" evidence="1">
    <location>
        <position position="124"/>
    </location>
    <ligand>
        <name>phosphoenolpyruvate</name>
        <dbReference type="ChEBI" id="CHEBI:58702"/>
    </ligand>
</feature>
<feature type="binding site" evidence="1">
    <location>
        <position position="168"/>
    </location>
    <ligand>
        <name>3-phosphoshikimate</name>
        <dbReference type="ChEBI" id="CHEBI:145989"/>
    </ligand>
</feature>
<feature type="binding site" evidence="1">
    <location>
        <position position="169"/>
    </location>
    <ligand>
        <name>3-phosphoshikimate</name>
        <dbReference type="ChEBI" id="CHEBI:145989"/>
    </ligand>
</feature>
<feature type="binding site" evidence="1">
    <location>
        <position position="169"/>
    </location>
    <ligand>
        <name>phosphoenolpyruvate</name>
        <dbReference type="ChEBI" id="CHEBI:58702"/>
    </ligand>
</feature>
<feature type="binding site" evidence="1">
    <location>
        <position position="310"/>
    </location>
    <ligand>
        <name>3-phosphoshikimate</name>
        <dbReference type="ChEBI" id="CHEBI:145989"/>
    </ligand>
</feature>
<feature type="binding site" evidence="1">
    <location>
        <position position="337"/>
    </location>
    <ligand>
        <name>3-phosphoshikimate</name>
        <dbReference type="ChEBI" id="CHEBI:145989"/>
    </ligand>
</feature>
<feature type="binding site" evidence="1">
    <location>
        <position position="341"/>
    </location>
    <ligand>
        <name>phosphoenolpyruvate</name>
        <dbReference type="ChEBI" id="CHEBI:58702"/>
    </ligand>
</feature>
<feature type="binding site" evidence="1">
    <location>
        <position position="382"/>
    </location>
    <ligand>
        <name>phosphoenolpyruvate</name>
        <dbReference type="ChEBI" id="CHEBI:58702"/>
    </ligand>
</feature>
<feature type="binding site" evidence="1">
    <location>
        <position position="409"/>
    </location>
    <ligand>
        <name>phosphoenolpyruvate</name>
        <dbReference type="ChEBI" id="CHEBI:58702"/>
    </ligand>
</feature>
<proteinExistence type="inferred from homology"/>